<protein>
    <recommendedName>
        <fullName evidence="1">Phosphatidylglycerol--prolipoprotein diacylglyceryl transferase</fullName>
        <ecNumber evidence="1">2.5.1.145</ecNumber>
    </recommendedName>
</protein>
<comment type="function">
    <text evidence="1">Catalyzes the transfer of the diacylglyceryl group from phosphatidylglycerol to the sulfhydryl group of the N-terminal cysteine of a prolipoprotein, the first step in the formation of mature lipoproteins.</text>
</comment>
<comment type="catalytic activity">
    <reaction evidence="1">
        <text>L-cysteinyl-[prolipoprotein] + a 1,2-diacyl-sn-glycero-3-phospho-(1'-sn-glycerol) = an S-1,2-diacyl-sn-glyceryl-L-cysteinyl-[prolipoprotein] + sn-glycerol 1-phosphate + H(+)</text>
        <dbReference type="Rhea" id="RHEA:56712"/>
        <dbReference type="Rhea" id="RHEA-COMP:14679"/>
        <dbReference type="Rhea" id="RHEA-COMP:14680"/>
        <dbReference type="ChEBI" id="CHEBI:15378"/>
        <dbReference type="ChEBI" id="CHEBI:29950"/>
        <dbReference type="ChEBI" id="CHEBI:57685"/>
        <dbReference type="ChEBI" id="CHEBI:64716"/>
        <dbReference type="ChEBI" id="CHEBI:140658"/>
        <dbReference type="EC" id="2.5.1.145"/>
    </reaction>
</comment>
<comment type="pathway">
    <text evidence="1">Protein modification; lipoprotein biosynthesis (diacylglyceryl transfer).</text>
</comment>
<comment type="subcellular location">
    <subcellularLocation>
        <location evidence="1">Cell inner membrane</location>
        <topology evidence="1">Multi-pass membrane protein</topology>
    </subcellularLocation>
</comment>
<comment type="similarity">
    <text evidence="1">Belongs to the Lgt family.</text>
</comment>
<proteinExistence type="inferred from homology"/>
<accession>A5F8Y5</accession>
<accession>C3LXY5</accession>
<sequence length="271" mass="30457">MPQGYLQFPNIDPVLFSIGPLAVRWYGLMYLVGFLFAMWLANRRADRAGSGWTREQVSDLLFAGFLGVVIGGRVGYVIFYNFDLFLADPLYLFKVWTGGMSFHGGLLGVITAMFWYARKNQRTFFGVADFVAPLVPFGLGMGRIGNFMNSELWGRVTDVPWAFVFPNGGPLPRHPSQLYEFALEGVVLFFILNWFIGKPRPLGSVSGLFLAGYGTFRFLVEYVREPDAQLGLFGGFISMGQILSLPMVIIGILMMVWSYKRGLYQDRVAAK</sequence>
<reference key="1">
    <citation type="submission" date="2007-03" db="EMBL/GenBank/DDBJ databases">
        <authorList>
            <person name="Heidelberg J."/>
        </authorList>
    </citation>
    <scope>NUCLEOTIDE SEQUENCE [LARGE SCALE GENOMIC DNA]</scope>
    <source>
        <strain>ATCC 39541 / Classical Ogawa 395 / O395</strain>
    </source>
</reference>
<reference key="2">
    <citation type="journal article" date="2008" name="PLoS ONE">
        <title>A recalibrated molecular clock and independent origins for the cholera pandemic clones.</title>
        <authorList>
            <person name="Feng L."/>
            <person name="Reeves P.R."/>
            <person name="Lan R."/>
            <person name="Ren Y."/>
            <person name="Gao C."/>
            <person name="Zhou Z."/>
            <person name="Ren Y."/>
            <person name="Cheng J."/>
            <person name="Wang W."/>
            <person name="Wang J."/>
            <person name="Qian W."/>
            <person name="Li D."/>
            <person name="Wang L."/>
        </authorList>
    </citation>
    <scope>NUCLEOTIDE SEQUENCE [LARGE SCALE GENOMIC DNA]</scope>
    <source>
        <strain>ATCC 39541 / Classical Ogawa 395 / O395</strain>
    </source>
</reference>
<evidence type="ECO:0000255" key="1">
    <source>
        <dbReference type="HAMAP-Rule" id="MF_01147"/>
    </source>
</evidence>
<keyword id="KW-0997">Cell inner membrane</keyword>
<keyword id="KW-1003">Cell membrane</keyword>
<keyword id="KW-0472">Membrane</keyword>
<keyword id="KW-0808">Transferase</keyword>
<keyword id="KW-0812">Transmembrane</keyword>
<keyword id="KW-1133">Transmembrane helix</keyword>
<dbReference type="EC" id="2.5.1.145" evidence="1"/>
<dbReference type="EMBL" id="CP000627">
    <property type="protein sequence ID" value="ABQ21391.1"/>
    <property type="molecule type" value="Genomic_DNA"/>
</dbReference>
<dbReference type="EMBL" id="CP001235">
    <property type="protein sequence ID" value="ACP08709.1"/>
    <property type="molecule type" value="Genomic_DNA"/>
</dbReference>
<dbReference type="RefSeq" id="WP_001135560.1">
    <property type="nucleotide sequence ID" value="NZ_JAACZH010000006.1"/>
</dbReference>
<dbReference type="SMR" id="A5F8Y5"/>
<dbReference type="GeneID" id="88783956"/>
<dbReference type="KEGG" id="vco:VC0395_A0206"/>
<dbReference type="KEGG" id="vcr:VC395_0691"/>
<dbReference type="PATRIC" id="fig|345073.21.peg.673"/>
<dbReference type="eggNOG" id="COG0682">
    <property type="taxonomic scope" value="Bacteria"/>
</dbReference>
<dbReference type="HOGENOM" id="CLU_013386_1_0_6"/>
<dbReference type="OrthoDB" id="871140at2"/>
<dbReference type="UniPathway" id="UPA00664"/>
<dbReference type="Proteomes" id="UP000000249">
    <property type="component" value="Chromosome 2"/>
</dbReference>
<dbReference type="GO" id="GO:0005886">
    <property type="term" value="C:plasma membrane"/>
    <property type="evidence" value="ECO:0007669"/>
    <property type="project" value="UniProtKB-SubCell"/>
</dbReference>
<dbReference type="GO" id="GO:0008961">
    <property type="term" value="F:phosphatidylglycerol-prolipoprotein diacylglyceryl transferase activity"/>
    <property type="evidence" value="ECO:0007669"/>
    <property type="project" value="UniProtKB-UniRule"/>
</dbReference>
<dbReference type="GO" id="GO:0042158">
    <property type="term" value="P:lipoprotein biosynthetic process"/>
    <property type="evidence" value="ECO:0007669"/>
    <property type="project" value="UniProtKB-UniRule"/>
</dbReference>
<dbReference type="HAMAP" id="MF_01147">
    <property type="entry name" value="Lgt"/>
    <property type="match status" value="1"/>
</dbReference>
<dbReference type="InterPro" id="IPR001640">
    <property type="entry name" value="Lgt"/>
</dbReference>
<dbReference type="NCBIfam" id="TIGR00544">
    <property type="entry name" value="lgt"/>
    <property type="match status" value="1"/>
</dbReference>
<dbReference type="PANTHER" id="PTHR30589:SF0">
    <property type="entry name" value="PHOSPHATIDYLGLYCEROL--PROLIPOPROTEIN DIACYLGLYCERYL TRANSFERASE"/>
    <property type="match status" value="1"/>
</dbReference>
<dbReference type="PANTHER" id="PTHR30589">
    <property type="entry name" value="PROLIPOPROTEIN DIACYLGLYCERYL TRANSFERASE"/>
    <property type="match status" value="1"/>
</dbReference>
<dbReference type="Pfam" id="PF01790">
    <property type="entry name" value="LGT"/>
    <property type="match status" value="1"/>
</dbReference>
<dbReference type="PROSITE" id="PS01311">
    <property type="entry name" value="LGT"/>
    <property type="match status" value="1"/>
</dbReference>
<feature type="chain" id="PRO_1000073061" description="Phosphatidylglycerol--prolipoprotein diacylglyceryl transferase">
    <location>
        <begin position="1"/>
        <end position="271"/>
    </location>
</feature>
<feature type="transmembrane region" description="Helical" evidence="1">
    <location>
        <begin position="21"/>
        <end position="41"/>
    </location>
</feature>
<feature type="transmembrane region" description="Helical" evidence="1">
    <location>
        <begin position="60"/>
        <end position="80"/>
    </location>
</feature>
<feature type="transmembrane region" description="Helical" evidence="1">
    <location>
        <begin position="95"/>
        <end position="115"/>
    </location>
</feature>
<feature type="transmembrane region" description="Helical" evidence="1">
    <location>
        <begin position="124"/>
        <end position="144"/>
    </location>
</feature>
<feature type="transmembrane region" description="Helical" evidence="1">
    <location>
        <begin position="177"/>
        <end position="197"/>
    </location>
</feature>
<feature type="transmembrane region" description="Helical" evidence="1">
    <location>
        <begin position="203"/>
        <end position="223"/>
    </location>
</feature>
<feature type="transmembrane region" description="Helical" evidence="1">
    <location>
        <begin position="236"/>
        <end position="256"/>
    </location>
</feature>
<feature type="binding site" evidence="1">
    <location>
        <position position="143"/>
    </location>
    <ligand>
        <name>a 1,2-diacyl-sn-glycero-3-phospho-(1'-sn-glycerol)</name>
        <dbReference type="ChEBI" id="CHEBI:64716"/>
    </ligand>
</feature>
<gene>
    <name evidence="1" type="primary">lgt</name>
    <name type="ordered locus">VC0395_A0206</name>
    <name type="ordered locus">VC395_0691</name>
</gene>
<organism>
    <name type="scientific">Vibrio cholerae serotype O1 (strain ATCC 39541 / Classical Ogawa 395 / O395)</name>
    <dbReference type="NCBI Taxonomy" id="345073"/>
    <lineage>
        <taxon>Bacteria</taxon>
        <taxon>Pseudomonadati</taxon>
        <taxon>Pseudomonadota</taxon>
        <taxon>Gammaproteobacteria</taxon>
        <taxon>Vibrionales</taxon>
        <taxon>Vibrionaceae</taxon>
        <taxon>Vibrio</taxon>
    </lineage>
</organism>
<name>LGT_VIBC3</name>